<evidence type="ECO:0000250" key="1"/>
<evidence type="ECO:0000255" key="2"/>
<evidence type="ECO:0000305" key="3"/>
<proteinExistence type="inferred from homology"/>
<dbReference type="EC" id="7.1.1.2"/>
<dbReference type="EMBL" id="M93388">
    <property type="protein sequence ID" value="AAA31753.2"/>
    <property type="molecule type" value="Genomic_DNA"/>
</dbReference>
<dbReference type="SMR" id="Q34522"/>
<dbReference type="DrugBank" id="DB12245">
    <property type="generic name" value="Triclabendazole"/>
</dbReference>
<dbReference type="GO" id="GO:0031966">
    <property type="term" value="C:mitochondrial membrane"/>
    <property type="evidence" value="ECO:0007669"/>
    <property type="project" value="UniProtKB-SubCell"/>
</dbReference>
<dbReference type="GO" id="GO:0008137">
    <property type="term" value="F:NADH dehydrogenase (ubiquinone) activity"/>
    <property type="evidence" value="ECO:0007669"/>
    <property type="project" value="UniProtKB-EC"/>
</dbReference>
<dbReference type="Gene3D" id="1.20.58.1610">
    <property type="entry name" value="NADH:ubiquinone/plastoquinone oxidoreductase, chain 3"/>
    <property type="match status" value="1"/>
</dbReference>
<dbReference type="InterPro" id="IPR000440">
    <property type="entry name" value="NADH_UbQ/plastoQ_OxRdtase_su3"/>
</dbReference>
<dbReference type="InterPro" id="IPR038430">
    <property type="entry name" value="NDAH_ubi_oxred_su3_sf"/>
</dbReference>
<dbReference type="Pfam" id="PF00507">
    <property type="entry name" value="Oxidored_q4"/>
    <property type="match status" value="1"/>
</dbReference>
<geneLocation type="mitochondrion"/>
<comment type="function">
    <text evidence="1">Core subunit of the mitochondrial membrane respiratory chain NADH dehydrogenase (Complex I) that is believed to belong to the minimal assembly required for catalysis. Complex I functions in the transfer of electrons from NADH to the respiratory chain. The immediate electron acceptor for the enzyme is believed to be ubiquinone (By similarity).</text>
</comment>
<comment type="catalytic activity">
    <reaction>
        <text>a ubiquinone + NADH + 5 H(+)(in) = a ubiquinol + NAD(+) + 4 H(+)(out)</text>
        <dbReference type="Rhea" id="RHEA:29091"/>
        <dbReference type="Rhea" id="RHEA-COMP:9565"/>
        <dbReference type="Rhea" id="RHEA-COMP:9566"/>
        <dbReference type="ChEBI" id="CHEBI:15378"/>
        <dbReference type="ChEBI" id="CHEBI:16389"/>
        <dbReference type="ChEBI" id="CHEBI:17976"/>
        <dbReference type="ChEBI" id="CHEBI:57540"/>
        <dbReference type="ChEBI" id="CHEBI:57945"/>
        <dbReference type="EC" id="7.1.1.2"/>
    </reaction>
</comment>
<comment type="subcellular location">
    <subcellularLocation>
        <location evidence="1">Mitochondrion membrane</location>
        <topology evidence="1">Multi-pass membrane protein</topology>
    </subcellularLocation>
</comment>
<comment type="similarity">
    <text evidence="3">Belongs to the complex I subunit 3 family.</text>
</comment>
<accession>Q34522</accession>
<gene>
    <name type="primary">ND3</name>
</gene>
<name>NU3M_FASHE</name>
<sequence length="118" mass="14032">MLFFAVLGLLFFLIFFLVLVFHAFLWNLDLGIFSGERSWVSSFECGFLSQRVTENYFSYTYFILLVFFVVFDLEVSLLLNMPLQGVLYKNFFSYLFFLVLLGIGFLVEVRRGYVRWAY</sequence>
<protein>
    <recommendedName>
        <fullName>NADH-ubiquinone oxidoreductase chain 3</fullName>
        <ecNumber>7.1.1.2</ecNumber>
    </recommendedName>
    <alternativeName>
        <fullName>NADH dehydrogenase subunit 3</fullName>
    </alternativeName>
</protein>
<keyword id="KW-0249">Electron transport</keyword>
<keyword id="KW-0472">Membrane</keyword>
<keyword id="KW-0496">Mitochondrion</keyword>
<keyword id="KW-0520">NAD</keyword>
<keyword id="KW-0679">Respiratory chain</keyword>
<keyword id="KW-1278">Translocase</keyword>
<keyword id="KW-0812">Transmembrane</keyword>
<keyword id="KW-1133">Transmembrane helix</keyword>
<keyword id="KW-0813">Transport</keyword>
<keyword id="KW-0830">Ubiquinone</keyword>
<feature type="chain" id="PRO_0000117743" description="NADH-ubiquinone oxidoreductase chain 3">
    <location>
        <begin position="1"/>
        <end position="118"/>
    </location>
</feature>
<feature type="transmembrane region" description="Helical" evidence="2">
    <location>
        <begin position="1"/>
        <end position="21"/>
    </location>
</feature>
<feature type="transmembrane region" description="Helical" evidence="2">
    <location>
        <begin position="59"/>
        <end position="79"/>
    </location>
</feature>
<feature type="transmembrane region" description="Helical" evidence="2">
    <location>
        <begin position="86"/>
        <end position="106"/>
    </location>
</feature>
<organism>
    <name type="scientific">Fasciola hepatica</name>
    <name type="common">Liver fluke</name>
    <dbReference type="NCBI Taxonomy" id="6192"/>
    <lineage>
        <taxon>Eukaryota</taxon>
        <taxon>Metazoa</taxon>
        <taxon>Spiralia</taxon>
        <taxon>Lophotrochozoa</taxon>
        <taxon>Platyhelminthes</taxon>
        <taxon>Trematoda</taxon>
        <taxon>Digenea</taxon>
        <taxon>Plagiorchiida</taxon>
        <taxon>Echinostomata</taxon>
        <taxon>Echinostomatoidea</taxon>
        <taxon>Fasciolidae</taxon>
        <taxon>Fasciola</taxon>
    </lineage>
</organism>
<reference key="1">
    <citation type="journal article" date="1989" name="J. Mol. Evol.">
        <title>Platyhelminth mitochondrial DNA: evidence for early evolutionary origin of a tRNA(serAGN) that contains a dihydrouridine arm replacement loop, and of serine-specifying AGA and AGG codons.</title>
        <authorList>
            <person name="Garey J.R."/>
            <person name="Wolstenholme D.R."/>
        </authorList>
    </citation>
    <scope>NUCLEOTIDE SEQUENCE [GENOMIC DNA]</scope>
</reference>